<reference key="1">
    <citation type="submission" date="2006-09" db="EMBL/GenBank/DDBJ databases">
        <title>Complete sequence of chromosome 1 of Shewanella sp. ANA-3.</title>
        <authorList>
            <person name="Copeland A."/>
            <person name="Lucas S."/>
            <person name="Lapidus A."/>
            <person name="Barry K."/>
            <person name="Detter J.C."/>
            <person name="Glavina del Rio T."/>
            <person name="Hammon N."/>
            <person name="Israni S."/>
            <person name="Dalin E."/>
            <person name="Tice H."/>
            <person name="Pitluck S."/>
            <person name="Chertkov O."/>
            <person name="Brettin T."/>
            <person name="Bruce D."/>
            <person name="Han C."/>
            <person name="Tapia R."/>
            <person name="Gilna P."/>
            <person name="Schmutz J."/>
            <person name="Larimer F."/>
            <person name="Land M."/>
            <person name="Hauser L."/>
            <person name="Kyrpides N."/>
            <person name="Kim E."/>
            <person name="Newman D."/>
            <person name="Salticov C."/>
            <person name="Konstantinidis K."/>
            <person name="Klappenback J."/>
            <person name="Tiedje J."/>
            <person name="Richardson P."/>
        </authorList>
    </citation>
    <scope>NUCLEOTIDE SEQUENCE [LARGE SCALE GENOMIC DNA]</scope>
    <source>
        <strain>ANA-3</strain>
    </source>
</reference>
<accession>A0L1Q7</accession>
<feature type="chain" id="PRO_1000063837" description="3-isopropylmalate dehydratase small subunit">
    <location>
        <begin position="1"/>
        <end position="201"/>
    </location>
</feature>
<gene>
    <name evidence="1" type="primary">leuD</name>
    <name type="ordered locus">Shewana3_3758</name>
</gene>
<name>LEUD_SHESA</name>
<evidence type="ECO:0000255" key="1">
    <source>
        <dbReference type="HAMAP-Rule" id="MF_01031"/>
    </source>
</evidence>
<comment type="function">
    <text evidence="1">Catalyzes the isomerization between 2-isopropylmalate and 3-isopropylmalate, via the formation of 2-isopropylmaleate.</text>
</comment>
<comment type="catalytic activity">
    <reaction evidence="1">
        <text>(2R,3S)-3-isopropylmalate = (2S)-2-isopropylmalate</text>
        <dbReference type="Rhea" id="RHEA:32287"/>
        <dbReference type="ChEBI" id="CHEBI:1178"/>
        <dbReference type="ChEBI" id="CHEBI:35121"/>
        <dbReference type="EC" id="4.2.1.33"/>
    </reaction>
</comment>
<comment type="pathway">
    <text evidence="1">Amino-acid biosynthesis; L-leucine biosynthesis; L-leucine from 3-methyl-2-oxobutanoate: step 2/4.</text>
</comment>
<comment type="subunit">
    <text evidence="1">Heterodimer of LeuC and LeuD.</text>
</comment>
<comment type="similarity">
    <text evidence="1">Belongs to the LeuD family. LeuD type 1 subfamily.</text>
</comment>
<organism>
    <name type="scientific">Shewanella sp. (strain ANA-3)</name>
    <dbReference type="NCBI Taxonomy" id="94122"/>
    <lineage>
        <taxon>Bacteria</taxon>
        <taxon>Pseudomonadati</taxon>
        <taxon>Pseudomonadota</taxon>
        <taxon>Gammaproteobacteria</taxon>
        <taxon>Alteromonadales</taxon>
        <taxon>Shewanellaceae</taxon>
        <taxon>Shewanella</taxon>
    </lineage>
</organism>
<proteinExistence type="inferred from homology"/>
<keyword id="KW-0028">Amino-acid biosynthesis</keyword>
<keyword id="KW-0100">Branched-chain amino acid biosynthesis</keyword>
<keyword id="KW-0432">Leucine biosynthesis</keyword>
<keyword id="KW-0456">Lyase</keyword>
<protein>
    <recommendedName>
        <fullName evidence="1">3-isopropylmalate dehydratase small subunit</fullName>
        <ecNumber evidence="1">4.2.1.33</ecNumber>
    </recommendedName>
    <alternativeName>
        <fullName evidence="1">Alpha-IPM isomerase</fullName>
        <shortName evidence="1">IPMI</shortName>
    </alternativeName>
    <alternativeName>
        <fullName evidence="1">Isopropylmalate isomerase</fullName>
    </alternativeName>
</protein>
<dbReference type="EC" id="4.2.1.33" evidence="1"/>
<dbReference type="EMBL" id="CP000469">
    <property type="protein sequence ID" value="ABK49976.1"/>
    <property type="molecule type" value="Genomic_DNA"/>
</dbReference>
<dbReference type="RefSeq" id="WP_011718507.1">
    <property type="nucleotide sequence ID" value="NC_008577.1"/>
</dbReference>
<dbReference type="SMR" id="A0L1Q7"/>
<dbReference type="STRING" id="94122.Shewana3_3758"/>
<dbReference type="KEGG" id="shn:Shewana3_3758"/>
<dbReference type="eggNOG" id="COG0066">
    <property type="taxonomic scope" value="Bacteria"/>
</dbReference>
<dbReference type="HOGENOM" id="CLU_081378_0_3_6"/>
<dbReference type="OrthoDB" id="9777465at2"/>
<dbReference type="UniPathway" id="UPA00048">
    <property type="reaction ID" value="UER00071"/>
</dbReference>
<dbReference type="Proteomes" id="UP000002589">
    <property type="component" value="Chromosome"/>
</dbReference>
<dbReference type="GO" id="GO:0009316">
    <property type="term" value="C:3-isopropylmalate dehydratase complex"/>
    <property type="evidence" value="ECO:0007669"/>
    <property type="project" value="InterPro"/>
</dbReference>
<dbReference type="GO" id="GO:0003861">
    <property type="term" value="F:3-isopropylmalate dehydratase activity"/>
    <property type="evidence" value="ECO:0007669"/>
    <property type="project" value="UniProtKB-UniRule"/>
</dbReference>
<dbReference type="GO" id="GO:0009098">
    <property type="term" value="P:L-leucine biosynthetic process"/>
    <property type="evidence" value="ECO:0007669"/>
    <property type="project" value="UniProtKB-UniRule"/>
</dbReference>
<dbReference type="CDD" id="cd01577">
    <property type="entry name" value="IPMI_Swivel"/>
    <property type="match status" value="1"/>
</dbReference>
<dbReference type="FunFam" id="3.20.19.10:FF:000003">
    <property type="entry name" value="3-isopropylmalate dehydratase small subunit"/>
    <property type="match status" value="1"/>
</dbReference>
<dbReference type="Gene3D" id="3.20.19.10">
    <property type="entry name" value="Aconitase, domain 4"/>
    <property type="match status" value="1"/>
</dbReference>
<dbReference type="HAMAP" id="MF_01031">
    <property type="entry name" value="LeuD_type1"/>
    <property type="match status" value="1"/>
</dbReference>
<dbReference type="InterPro" id="IPR004431">
    <property type="entry name" value="3-IsopropMal_deHydase_ssu"/>
</dbReference>
<dbReference type="InterPro" id="IPR015928">
    <property type="entry name" value="Aconitase/3IPM_dehydase_swvl"/>
</dbReference>
<dbReference type="InterPro" id="IPR000573">
    <property type="entry name" value="AconitaseA/IPMdHydase_ssu_swvl"/>
</dbReference>
<dbReference type="InterPro" id="IPR033940">
    <property type="entry name" value="IPMI_Swivel"/>
</dbReference>
<dbReference type="InterPro" id="IPR050075">
    <property type="entry name" value="LeuD"/>
</dbReference>
<dbReference type="NCBIfam" id="TIGR00171">
    <property type="entry name" value="leuD"/>
    <property type="match status" value="1"/>
</dbReference>
<dbReference type="NCBIfam" id="NF002458">
    <property type="entry name" value="PRK01641.1"/>
    <property type="match status" value="1"/>
</dbReference>
<dbReference type="PANTHER" id="PTHR43345:SF5">
    <property type="entry name" value="3-ISOPROPYLMALATE DEHYDRATASE SMALL SUBUNIT"/>
    <property type="match status" value="1"/>
</dbReference>
<dbReference type="PANTHER" id="PTHR43345">
    <property type="entry name" value="3-ISOPROPYLMALATE DEHYDRATASE SMALL SUBUNIT 2-RELATED-RELATED"/>
    <property type="match status" value="1"/>
</dbReference>
<dbReference type="Pfam" id="PF00694">
    <property type="entry name" value="Aconitase_C"/>
    <property type="match status" value="1"/>
</dbReference>
<dbReference type="SUPFAM" id="SSF52016">
    <property type="entry name" value="LeuD/IlvD-like"/>
    <property type="match status" value="1"/>
</dbReference>
<sequence length="201" mass="21970">MQPFTSHTGLAVMIDSANIDTDQIIPKQFLSKVTRDGFGVHLFHDWRYLDDAGEVPNPDFTLNKPRYSGASILLAQENFGCGSSREHAPWALADFGLRAIIAPSFADIFYGNSINNGLLPVKLSANEVRQLMDEVASEEGAQITVDLTTCKVTSPLGAEFSFTLAESARHKLLNGLDAIGLTLSHGIQIGEYESQIPSWRC</sequence>